<organism>
    <name type="scientific">Canis lupus familiaris</name>
    <name type="common">Dog</name>
    <name type="synonym">Canis familiaris</name>
    <dbReference type="NCBI Taxonomy" id="9615"/>
    <lineage>
        <taxon>Eukaryota</taxon>
        <taxon>Metazoa</taxon>
        <taxon>Chordata</taxon>
        <taxon>Craniata</taxon>
        <taxon>Vertebrata</taxon>
        <taxon>Euteleostomi</taxon>
        <taxon>Mammalia</taxon>
        <taxon>Eutheria</taxon>
        <taxon>Laurasiatheria</taxon>
        <taxon>Carnivora</taxon>
        <taxon>Caniformia</taxon>
        <taxon>Canidae</taxon>
        <taxon>Canis</taxon>
    </lineage>
</organism>
<protein>
    <recommendedName>
        <fullName>Signal peptidase complex catalytic subunit SEC11C</fullName>
        <ecNumber evidence="4 6">3.4.21.89</ecNumber>
    </recommendedName>
    <alternativeName>
        <fullName>Microsomal signal peptidase 21 kDa subunit</fullName>
        <shortName>SPase 21 kDa subunit</shortName>
    </alternativeName>
    <alternativeName>
        <fullName>SEC11 homolog C</fullName>
    </alternativeName>
    <alternativeName>
        <fullName>SEC11-like protein 3</fullName>
    </alternativeName>
    <alternativeName>
        <fullName>SPC21</fullName>
    </alternativeName>
</protein>
<accession>P13679</accession>
<name>SC11C_CANLF</name>
<dbReference type="EC" id="3.4.21.89" evidence="4 6"/>
<dbReference type="EMBL" id="J05069">
    <property type="protein sequence ID" value="AAA30896.1"/>
    <property type="molecule type" value="mRNA"/>
</dbReference>
<dbReference type="PIR" id="A34229">
    <property type="entry name" value="A34229"/>
</dbReference>
<dbReference type="RefSeq" id="NP_001003312.1">
    <property type="nucleotide sequence ID" value="NM_001003312.2"/>
</dbReference>
<dbReference type="SMR" id="P13679"/>
<dbReference type="CORUM" id="P13679"/>
<dbReference type="FunCoup" id="P13679">
    <property type="interactions" value="721"/>
</dbReference>
<dbReference type="STRING" id="9615.ENSCAFP00000063997"/>
<dbReference type="MEROPS" id="S26.010"/>
<dbReference type="PaxDb" id="9612-ENSCAFP00000000138"/>
<dbReference type="GeneID" id="404003"/>
<dbReference type="KEGG" id="cfa:404003"/>
<dbReference type="CTD" id="90701"/>
<dbReference type="eggNOG" id="KOG3342">
    <property type="taxonomic scope" value="Eukaryota"/>
</dbReference>
<dbReference type="HOGENOM" id="CLU_089996_0_0_1"/>
<dbReference type="InParanoid" id="P13679"/>
<dbReference type="OMA" id="GSMEPFM"/>
<dbReference type="OrthoDB" id="10257561at2759"/>
<dbReference type="TreeFam" id="TF313648"/>
<dbReference type="Proteomes" id="UP000002254">
    <property type="component" value="Unplaced"/>
</dbReference>
<dbReference type="Proteomes" id="UP000694429">
    <property type="component" value="Unplaced"/>
</dbReference>
<dbReference type="Proteomes" id="UP000694542">
    <property type="component" value="Unplaced"/>
</dbReference>
<dbReference type="Proteomes" id="UP000805418">
    <property type="component" value="Unplaced"/>
</dbReference>
<dbReference type="GO" id="GO:0005789">
    <property type="term" value="C:endoplasmic reticulum membrane"/>
    <property type="evidence" value="ECO:0000304"/>
    <property type="project" value="Reactome"/>
</dbReference>
<dbReference type="GO" id="GO:0005787">
    <property type="term" value="C:signal peptidase complex"/>
    <property type="evidence" value="ECO:0000314"/>
    <property type="project" value="UniProtKB"/>
</dbReference>
<dbReference type="GO" id="GO:0008233">
    <property type="term" value="F:peptidase activity"/>
    <property type="evidence" value="ECO:0000318"/>
    <property type="project" value="GO_Central"/>
</dbReference>
<dbReference type="GO" id="GO:0004252">
    <property type="term" value="F:serine-type endopeptidase activity"/>
    <property type="evidence" value="ECO:0000250"/>
    <property type="project" value="UniProtKB"/>
</dbReference>
<dbReference type="GO" id="GO:0006465">
    <property type="term" value="P:signal peptide processing"/>
    <property type="evidence" value="ECO:0000250"/>
    <property type="project" value="UniProtKB"/>
</dbReference>
<dbReference type="CDD" id="cd06530">
    <property type="entry name" value="S26_SPase_I"/>
    <property type="match status" value="1"/>
</dbReference>
<dbReference type="FunFam" id="2.10.109.10:FF:000003">
    <property type="entry name" value="Signal peptidase complex catalytic subunit SEC11"/>
    <property type="match status" value="1"/>
</dbReference>
<dbReference type="Gene3D" id="2.10.109.10">
    <property type="entry name" value="Umud Fragment, subunit A"/>
    <property type="match status" value="1"/>
</dbReference>
<dbReference type="InterPro" id="IPR036286">
    <property type="entry name" value="LexA/Signal_pep-like_sf"/>
</dbReference>
<dbReference type="InterPro" id="IPR019758">
    <property type="entry name" value="Pept_S26A_signal_pept_1_CS"/>
</dbReference>
<dbReference type="InterPro" id="IPR019756">
    <property type="entry name" value="Pept_S26A_signal_pept_1_Ser-AS"/>
</dbReference>
<dbReference type="InterPro" id="IPR015927">
    <property type="entry name" value="Peptidase_S24_S26A/B/C"/>
</dbReference>
<dbReference type="InterPro" id="IPR019533">
    <property type="entry name" value="Peptidase_S26"/>
</dbReference>
<dbReference type="InterPro" id="IPR001733">
    <property type="entry name" value="Peptidase_S26B"/>
</dbReference>
<dbReference type="NCBIfam" id="TIGR02228">
    <property type="entry name" value="sigpep_I_arch"/>
    <property type="match status" value="1"/>
</dbReference>
<dbReference type="PANTHER" id="PTHR10806">
    <property type="entry name" value="SIGNAL PEPTIDASE COMPLEX CATALYTIC SUBUNIT SEC11"/>
    <property type="match status" value="1"/>
</dbReference>
<dbReference type="PANTHER" id="PTHR10806:SF12">
    <property type="entry name" value="SIGNAL PEPTIDASE COMPLEX CATALYTIC SUBUNIT SEC11C"/>
    <property type="match status" value="1"/>
</dbReference>
<dbReference type="Pfam" id="PF00717">
    <property type="entry name" value="Peptidase_S24"/>
    <property type="match status" value="1"/>
</dbReference>
<dbReference type="PRINTS" id="PR00728">
    <property type="entry name" value="SIGNALPTASE"/>
</dbReference>
<dbReference type="SUPFAM" id="SSF51306">
    <property type="entry name" value="LexA/Signal peptidase"/>
    <property type="match status" value="1"/>
</dbReference>
<dbReference type="PROSITE" id="PS00501">
    <property type="entry name" value="SPASE_I_1"/>
    <property type="match status" value="1"/>
</dbReference>
<dbReference type="PROSITE" id="PS00761">
    <property type="entry name" value="SPASE_I_3"/>
    <property type="match status" value="1"/>
</dbReference>
<reference key="1">
    <citation type="journal article" date="1989" name="J. Biol. Chem.">
        <title>A subunit of mammalian signal peptidase is homologous to yeast SEC11 protein.</title>
        <authorList>
            <person name="Greenburg G."/>
            <person name="Shelness G.S."/>
            <person name="Blobel G."/>
        </authorList>
    </citation>
    <scope>NUCLEOTIDE SEQUENCE [MRNA]</scope>
    <scope>PROTEIN SEQUENCE OF 2-31 AND 69-89</scope>
    <source>
        <tissue>Liver</tissue>
    </source>
</reference>
<reference key="2">
    <citation type="journal article" date="1986" name="Proc. Natl. Acad. Sci. U.S.A.">
        <title>Purification of microsomal signal peptidase as a complex.</title>
        <authorList>
            <person name="Evans E.A."/>
            <person name="Gilmore R."/>
            <person name="Blobel G."/>
        </authorList>
    </citation>
    <scope>FUNCTION</scope>
    <scope>CATALYTIC ACTIVITY</scope>
    <scope>IDENTIFICATION IN THE SIGNAL PEPTIDASE COMPLEX</scope>
    <scope>SUBCELLULAR LOCATION</scope>
</reference>
<reference key="3">
    <citation type="journal article" date="1993" name="J. Biol. Chem.">
        <title>Membrane topology and biogenesis of eukaryotic signal peptidase.</title>
        <authorList>
            <person name="Shelness G.S."/>
            <person name="Lin L."/>
            <person name="Nicchitta C.V."/>
        </authorList>
    </citation>
    <scope>FUNCTION</scope>
    <scope>SUBCELLULAR LOCATION</scope>
    <scope>TOPOLOGY</scope>
</reference>
<reference key="4">
    <citation type="journal article" date="2003" name="J. Biol. Chem.">
        <title>Genetic complementation in yeast reveals functional similarities between the catalytic subunits of mammalian signal peptidase complex.</title>
        <authorList>
            <person name="Liang H."/>
            <person name="VanValkenburgh C."/>
            <person name="Chen X."/>
            <person name="Mullins C."/>
            <person name="Van Kaer L."/>
            <person name="Green N."/>
            <person name="Fang H."/>
        </authorList>
    </citation>
    <scope>FUNCTION</scope>
    <scope>CATALYTIC ACTIVITY</scope>
</reference>
<evidence type="ECO:0000250" key="1">
    <source>
        <dbReference type="UniProtKB" id="P67812"/>
    </source>
</evidence>
<evidence type="ECO:0000250" key="2">
    <source>
        <dbReference type="UniProtKB" id="Q9BY50"/>
    </source>
</evidence>
<evidence type="ECO:0000255" key="3"/>
<evidence type="ECO:0000269" key="4">
    <source>
    </source>
</evidence>
<evidence type="ECO:0000269" key="5">
    <source>
    </source>
</evidence>
<evidence type="ECO:0000269" key="6">
    <source>
    </source>
</evidence>
<evidence type="ECO:0000269" key="7">
    <source>
    </source>
</evidence>
<evidence type="ECO:0000305" key="8"/>
<gene>
    <name type="primary">SEC11C</name>
    <name type="synonym">SEC11L3</name>
    <name type="synonym">SPC21</name>
</gene>
<keyword id="KW-0903">Direct protein sequencing</keyword>
<keyword id="KW-0256">Endoplasmic reticulum</keyword>
<keyword id="KW-0378">Hydrolase</keyword>
<keyword id="KW-0472">Membrane</keyword>
<keyword id="KW-0645">Protease</keyword>
<keyword id="KW-1185">Reference proteome</keyword>
<keyword id="KW-0735">Signal-anchor</keyword>
<keyword id="KW-0812">Transmembrane</keyword>
<keyword id="KW-1133">Transmembrane helix</keyword>
<sequence>MVRAGAVGTHLPASGLDIFGDLRKMNKRQLYYQVLNFAMIVSSALMIWKGLIVLTGSESPIVVVLSGSMEPAFHRGDLLFLTNFREDPIRAGEIVVFKVEGRDIPIVHRVIKVHEKDNGDIKFLTKGDNNEVDDRGLYKEGQNWLEKKDVVGRARGFLPYVGMVTIIMNDYPKFKYALLAVMGAYVLLKRES</sequence>
<feature type="initiator methionine" description="Removed" evidence="5">
    <location>
        <position position="1"/>
    </location>
</feature>
<feature type="chain" id="PRO_0000109547" description="Signal peptidase complex catalytic subunit SEC11C">
    <location>
        <begin position="2"/>
        <end position="192"/>
    </location>
</feature>
<feature type="topological domain" description="Cytoplasmic" evidence="7">
    <location>
        <begin position="2"/>
        <end position="28"/>
    </location>
</feature>
<feature type="transmembrane region" description="Helical; Signal-anchor for type II membrane protein" evidence="3">
    <location>
        <begin position="29"/>
        <end position="48"/>
    </location>
</feature>
<feature type="topological domain" description="Lumenal" evidence="7">
    <location>
        <begin position="49"/>
        <end position="192"/>
    </location>
</feature>
<feature type="region of interest" description="C-terminal short (CTS) helix" evidence="2">
    <location>
        <begin position="177"/>
        <end position="188"/>
    </location>
</feature>
<feature type="active site" description="Charge relay system" evidence="2">
    <location>
        <position position="68"/>
    </location>
</feature>
<feature type="active site" description="Charge relay system" evidence="2">
    <location>
        <position position="108"/>
    </location>
</feature>
<feature type="active site" description="Charge relay system" evidence="2">
    <location>
        <position position="134"/>
    </location>
</feature>
<proteinExistence type="evidence at protein level"/>
<comment type="function">
    <text evidence="1 4 6 7">Catalytic component of the signal peptidase complex (SPC) which catalyzes the cleavage of N-terminal signal sequences from nascent proteins as they are translocated into the lumen of the endoplasmic reticulum (PubMed:14559916, PubMed:3511473, PubMed:8444896). Specifically cleaves N-terminal signal peptides that contain a hydrophobic alpha-helix (h-region) shorter than 18-20 amino acids (By similarity).</text>
</comment>
<comment type="catalytic activity">
    <reaction evidence="4 6">
        <text>Cleavage of hydrophobic, N-terminal signal or leader sequences from secreted and periplasmic proteins.</text>
        <dbReference type="EC" id="3.4.21.89"/>
    </reaction>
</comment>
<comment type="subunit">
    <text evidence="1 6">Component of the signal peptidase complex paralog C (SPC-C) composed of a catalytic subunit SEC11C and three accessory subunits SPCS1, SPCS2 and SPCS3 (PubMed:3511473). Within the complex, interacts with SPCS2 and SPCS3 (By similarity). The complex induces a local thinning of the ER membrane which is used to measure the length of the signal peptide (SP) h-region of protein substrates (By similarity). This ensures the selectivity of the complex towards h-regions shorter than 18-20 amino acids (By similarity).</text>
</comment>
<comment type="subcellular location">
    <subcellularLocation>
        <location evidence="6 7">Endoplasmic reticulum membrane</location>
        <topology evidence="7">Single-pass type II membrane protein</topology>
    </subcellularLocation>
</comment>
<comment type="domain">
    <text evidence="1">The C-terminal short (CTS) helix is essential for catalytic activity (By similarity). It may be accommodated as a transmembrane helix in the thinned membrane environment of the complex, similarly to the signal peptide in the complex substrates (By similarity).</text>
</comment>
<comment type="PTM">
    <text evidence="2">May undergo processing at the N-terminus.</text>
</comment>
<comment type="similarity">
    <text evidence="8">Belongs to the peptidase S26B family.</text>
</comment>